<gene>
    <name type="ORF">ZK1067.4</name>
</gene>
<feature type="chain" id="PRO_0000282989" description="Transmembrane protein 151 homolog">
    <location>
        <begin position="1"/>
        <end position="541"/>
    </location>
</feature>
<feature type="transmembrane region" description="Helical" evidence="1">
    <location>
        <begin position="27"/>
        <end position="47"/>
    </location>
</feature>
<feature type="transmembrane region" description="Helical" evidence="1">
    <location>
        <begin position="73"/>
        <end position="93"/>
    </location>
</feature>
<feature type="transmembrane region" description="Helical" evidence="1">
    <location>
        <begin position="254"/>
        <end position="274"/>
    </location>
</feature>
<feature type="region of interest" description="Disordered" evidence="2">
    <location>
        <begin position="503"/>
        <end position="541"/>
    </location>
</feature>
<feature type="compositionally biased region" description="Low complexity" evidence="2">
    <location>
        <begin position="515"/>
        <end position="535"/>
    </location>
</feature>
<protein>
    <recommendedName>
        <fullName>Transmembrane protein 151 homolog</fullName>
    </recommendedName>
</protein>
<evidence type="ECO:0000255" key="1"/>
<evidence type="ECO:0000256" key="2">
    <source>
        <dbReference type="SAM" id="MobiDB-lite"/>
    </source>
</evidence>
<evidence type="ECO:0000305" key="3"/>
<accession>Q23387</accession>
<dbReference type="EMBL" id="Z70038">
    <property type="protein sequence ID" value="CAA93883.2"/>
    <property type="molecule type" value="Genomic_DNA"/>
</dbReference>
<dbReference type="PIR" id="T27683">
    <property type="entry name" value="T27683"/>
</dbReference>
<dbReference type="RefSeq" id="NP_495963.2">
    <property type="nucleotide sequence ID" value="NM_063562.5"/>
</dbReference>
<dbReference type="FunCoup" id="Q23387">
    <property type="interactions" value="91"/>
</dbReference>
<dbReference type="PaxDb" id="6239-ZK1067.4"/>
<dbReference type="EnsemblMetazoa" id="ZK1067.4.1">
    <property type="protein sequence ID" value="ZK1067.4.1"/>
    <property type="gene ID" value="WBGene00014210"/>
</dbReference>
<dbReference type="GeneID" id="191517"/>
<dbReference type="KEGG" id="cel:CELE_ZK1067.4"/>
<dbReference type="UCSC" id="ZK1067.4">
    <property type="organism name" value="c. elegans"/>
</dbReference>
<dbReference type="AGR" id="WB:WBGene00014210"/>
<dbReference type="CTD" id="191517"/>
<dbReference type="WormBase" id="ZK1067.4">
    <property type="protein sequence ID" value="CE31139"/>
    <property type="gene ID" value="WBGene00014210"/>
</dbReference>
<dbReference type="eggNOG" id="ENOG502QSYQ">
    <property type="taxonomic scope" value="Eukaryota"/>
</dbReference>
<dbReference type="GeneTree" id="ENSGT00390000013762"/>
<dbReference type="HOGENOM" id="CLU_023650_2_0_1"/>
<dbReference type="InParanoid" id="Q23387"/>
<dbReference type="OMA" id="LMECWHS"/>
<dbReference type="OrthoDB" id="190434at2759"/>
<dbReference type="PhylomeDB" id="Q23387"/>
<dbReference type="PRO" id="PR:Q23387"/>
<dbReference type="Proteomes" id="UP000001940">
    <property type="component" value="Chromosome II"/>
</dbReference>
<dbReference type="Bgee" id="WBGene00014210">
    <property type="expression patterns" value="Expressed in larva and 3 other cell types or tissues"/>
</dbReference>
<dbReference type="GO" id="GO:0016020">
    <property type="term" value="C:membrane"/>
    <property type="evidence" value="ECO:0000318"/>
    <property type="project" value="GO_Central"/>
</dbReference>
<dbReference type="InterPro" id="IPR026767">
    <property type="entry name" value="Tmem151"/>
</dbReference>
<dbReference type="PANTHER" id="PTHR31893">
    <property type="entry name" value="TRANSMEMBRANE PROTEIN 151 HOMOLOG"/>
    <property type="match status" value="1"/>
</dbReference>
<dbReference type="PANTHER" id="PTHR31893:SF5">
    <property type="entry name" value="TRANSMEMBRANE PROTEIN 151 HOMOLOG"/>
    <property type="match status" value="1"/>
</dbReference>
<dbReference type="Pfam" id="PF14857">
    <property type="entry name" value="TMEM151"/>
    <property type="match status" value="1"/>
</dbReference>
<keyword id="KW-0472">Membrane</keyword>
<keyword id="KW-1185">Reference proteome</keyword>
<keyword id="KW-0812">Transmembrane</keyword>
<keyword id="KW-1133">Transmembrane helix</keyword>
<comment type="subcellular location">
    <subcellularLocation>
        <location evidence="3">Membrane</location>
        <topology evidence="3">Multi-pass membrane protein</topology>
    </subcellularLocation>
</comment>
<comment type="similarity">
    <text evidence="3">Belongs to the TMEM151 family.</text>
</comment>
<reference key="1">
    <citation type="journal article" date="1998" name="Science">
        <title>Genome sequence of the nematode C. elegans: a platform for investigating biology.</title>
        <authorList>
            <consortium name="The C. elegans sequencing consortium"/>
        </authorList>
    </citation>
    <scope>NUCLEOTIDE SEQUENCE [LARGE SCALE GENOMIC DNA]</scope>
    <source>
        <strain>Bristol N2</strain>
    </source>
</reference>
<name>TM151_CAEEL</name>
<organism>
    <name type="scientific">Caenorhabditis elegans</name>
    <dbReference type="NCBI Taxonomy" id="6239"/>
    <lineage>
        <taxon>Eukaryota</taxon>
        <taxon>Metazoa</taxon>
        <taxon>Ecdysozoa</taxon>
        <taxon>Nematoda</taxon>
        <taxon>Chromadorea</taxon>
        <taxon>Rhabditida</taxon>
        <taxon>Rhabditina</taxon>
        <taxon>Rhabditomorpha</taxon>
        <taxon>Rhabditoidea</taxon>
        <taxon>Rhabditidae</taxon>
        <taxon>Peloderinae</taxon>
        <taxon>Caenorhabditis</taxon>
    </lineage>
</organism>
<proteinExistence type="inferred from homology"/>
<sequence>MAGTVDAQEHVAKPRRPNIFRVLRRTGYGKCLVCSLLLILCFFYATFCHVKHEAYSGSQPLLIYQHGPCAQGYNFVPIVFGLMLYIVYLMECWHSRTKIINMKKVRVEDALDYITALRTSPPIVWWKSVCYHYTRKTRQVTRYRNGDAVSATQVYYERMNSHQAGSMFIYDTCGFRDISKSILEVEKFHVTRIRLSRSFVFANMQAATEFEQQRSRFFNDNETKDDYMEVREGMDLSDVGFVEEILAFNKPTPPWFLHPIVFWFFSIFVLSWPLRIYTEWRTAVLSFQVIKLFGTNYLSPNSVNYTGPLTRTSTMDTVELEALLRREQHFVVPSYSEVMLMQNTIANSNTNYPNIRCLDPVILPRPFVSTTNEHIVLRNYGATETDNSLSEPITATPRPLRVSRSMTFAAQGNLEESAENLSCLENGSRANRAIPSSRRNLPLRSLSIGGISAWSNGYREIGNPDDSQLLIEPDEPPPPYEVALRMCAPLYERLRRSISSRLASISHSSSKDLKSLTLKSSSSNNNNNNSNNNNNDDPEHP</sequence>